<evidence type="ECO:0000255" key="1">
    <source>
        <dbReference type="HAMAP-Rule" id="MF_00484"/>
    </source>
</evidence>
<name>GLGA_SALEP</name>
<protein>
    <recommendedName>
        <fullName evidence="1">Glycogen synthase</fullName>
        <ecNumber evidence="1">2.4.1.21</ecNumber>
    </recommendedName>
    <alternativeName>
        <fullName evidence="1">Starch [bacterial glycogen] synthase</fullName>
    </alternativeName>
</protein>
<proteinExistence type="inferred from homology"/>
<reference key="1">
    <citation type="journal article" date="2008" name="Genome Res.">
        <title>Comparative genome analysis of Salmonella enteritidis PT4 and Salmonella gallinarum 287/91 provides insights into evolutionary and host adaptation pathways.</title>
        <authorList>
            <person name="Thomson N.R."/>
            <person name="Clayton D.J."/>
            <person name="Windhorst D."/>
            <person name="Vernikos G."/>
            <person name="Davidson S."/>
            <person name="Churcher C."/>
            <person name="Quail M.A."/>
            <person name="Stevens M."/>
            <person name="Jones M.A."/>
            <person name="Watson M."/>
            <person name="Barron A."/>
            <person name="Layton A."/>
            <person name="Pickard D."/>
            <person name="Kingsley R.A."/>
            <person name="Bignell A."/>
            <person name="Clark L."/>
            <person name="Harris B."/>
            <person name="Ormond D."/>
            <person name="Abdellah Z."/>
            <person name="Brooks K."/>
            <person name="Cherevach I."/>
            <person name="Chillingworth T."/>
            <person name="Woodward J."/>
            <person name="Norberczak H."/>
            <person name="Lord A."/>
            <person name="Arrowsmith C."/>
            <person name="Jagels K."/>
            <person name="Moule S."/>
            <person name="Mungall K."/>
            <person name="Saunders M."/>
            <person name="Whitehead S."/>
            <person name="Chabalgoity J.A."/>
            <person name="Maskell D."/>
            <person name="Humphreys T."/>
            <person name="Roberts M."/>
            <person name="Barrow P.A."/>
            <person name="Dougan G."/>
            <person name="Parkhill J."/>
        </authorList>
    </citation>
    <scope>NUCLEOTIDE SEQUENCE [LARGE SCALE GENOMIC DNA]</scope>
    <source>
        <strain>P125109</strain>
    </source>
</reference>
<keyword id="KW-0320">Glycogen biosynthesis</keyword>
<keyword id="KW-0328">Glycosyltransferase</keyword>
<keyword id="KW-0808">Transferase</keyword>
<sequence>MQVLHVCSEMFPLLKTGGLADVIGALPAAQIADGVDVRVLLPGFPDIRRGIPDAHVVSRRDTFAGKISLLFGHYNGVGIYLIDAPHLYERPGSPYHDTNLYAYTDNVLRFALLGWVGCEMACGLDPFWRPDVVHAHDWHAGLAPAYLAARGRPAKSVFTVHNLAYQGMFYAKHMDDIELPWSFFNMHGLEFNGQLSFLKAGLYYADHITAVSPTYAREITEPQFAYGMEGLLRQRHLEGRLSGILNGVDEKIWNPESDLLLASRYTRDTLEEKAENKRQLQIAMGLKVNDKVPLFAVVSRLTNQKGLDLVLEALPGLLEQGGQLALLGAGDPVLQEGFLAAAAEHPGQVGVQIGYHEAFSHRIMGGADVILVPSRFEPCGLTQLYGLKYGTLPLVRRTGGLADTVSDSSLENLADGIASGFVFEDSNAWSLLRAIRRAFVLWSRPSLWRFVQRQAMAMDFSWQVAAKSYRELYYRLK</sequence>
<comment type="function">
    <text evidence="1">Synthesizes alpha-1,4-glucan chains using ADP-glucose.</text>
</comment>
<comment type="catalytic activity">
    <reaction evidence="1">
        <text>[(1-&gt;4)-alpha-D-glucosyl](n) + ADP-alpha-D-glucose = [(1-&gt;4)-alpha-D-glucosyl](n+1) + ADP + H(+)</text>
        <dbReference type="Rhea" id="RHEA:18189"/>
        <dbReference type="Rhea" id="RHEA-COMP:9584"/>
        <dbReference type="Rhea" id="RHEA-COMP:9587"/>
        <dbReference type="ChEBI" id="CHEBI:15378"/>
        <dbReference type="ChEBI" id="CHEBI:15444"/>
        <dbReference type="ChEBI" id="CHEBI:57498"/>
        <dbReference type="ChEBI" id="CHEBI:456216"/>
        <dbReference type="EC" id="2.4.1.21"/>
    </reaction>
</comment>
<comment type="pathway">
    <text evidence="1">Glycan biosynthesis; glycogen biosynthesis.</text>
</comment>
<comment type="similarity">
    <text evidence="1">Belongs to the glycosyltransferase 1 family. Bacterial/plant glycogen synthase subfamily.</text>
</comment>
<gene>
    <name evidence="1" type="primary">glgA</name>
    <name type="ordered locus">SEN3359</name>
</gene>
<accession>B5R394</accession>
<dbReference type="EC" id="2.4.1.21" evidence="1"/>
<dbReference type="EMBL" id="AM933172">
    <property type="protein sequence ID" value="CAR34935.1"/>
    <property type="molecule type" value="Genomic_DNA"/>
</dbReference>
<dbReference type="RefSeq" id="WP_001197669.1">
    <property type="nucleotide sequence ID" value="NC_011294.1"/>
</dbReference>
<dbReference type="SMR" id="B5R394"/>
<dbReference type="CAZy" id="GT5">
    <property type="family name" value="Glycosyltransferase Family 5"/>
</dbReference>
<dbReference type="KEGG" id="set:SEN3359"/>
<dbReference type="HOGENOM" id="CLU_009583_18_4_6"/>
<dbReference type="UniPathway" id="UPA00164"/>
<dbReference type="Proteomes" id="UP000000613">
    <property type="component" value="Chromosome"/>
</dbReference>
<dbReference type="GO" id="GO:0005829">
    <property type="term" value="C:cytosol"/>
    <property type="evidence" value="ECO:0007669"/>
    <property type="project" value="TreeGrafter"/>
</dbReference>
<dbReference type="GO" id="GO:0009011">
    <property type="term" value="F:alpha-1,4-glucan glucosyltransferase (ADP-glucose donor) activity"/>
    <property type="evidence" value="ECO:0007669"/>
    <property type="project" value="UniProtKB-UniRule"/>
</dbReference>
<dbReference type="GO" id="GO:0004373">
    <property type="term" value="F:alpha-1,4-glucan glucosyltransferase (UDP-glucose donor) activity"/>
    <property type="evidence" value="ECO:0007669"/>
    <property type="project" value="InterPro"/>
</dbReference>
<dbReference type="GO" id="GO:0005978">
    <property type="term" value="P:glycogen biosynthetic process"/>
    <property type="evidence" value="ECO:0007669"/>
    <property type="project" value="UniProtKB-UniRule"/>
</dbReference>
<dbReference type="CDD" id="cd03791">
    <property type="entry name" value="GT5_Glycogen_synthase_DULL1-like"/>
    <property type="match status" value="1"/>
</dbReference>
<dbReference type="FunFam" id="3.40.50.2000:FF:000008">
    <property type="entry name" value="Glycogen synthase"/>
    <property type="match status" value="1"/>
</dbReference>
<dbReference type="FunFam" id="3.40.50.2000:FF:000011">
    <property type="entry name" value="Glycogen synthase"/>
    <property type="match status" value="1"/>
</dbReference>
<dbReference type="Gene3D" id="3.40.50.2000">
    <property type="entry name" value="Glycogen Phosphorylase B"/>
    <property type="match status" value="2"/>
</dbReference>
<dbReference type="HAMAP" id="MF_00484">
    <property type="entry name" value="Glycogen_synth"/>
    <property type="match status" value="1"/>
</dbReference>
<dbReference type="InterPro" id="IPR001296">
    <property type="entry name" value="Glyco_trans_1"/>
</dbReference>
<dbReference type="InterPro" id="IPR011835">
    <property type="entry name" value="GS/SS"/>
</dbReference>
<dbReference type="InterPro" id="IPR013534">
    <property type="entry name" value="Starch_synth_cat_dom"/>
</dbReference>
<dbReference type="NCBIfam" id="TIGR02095">
    <property type="entry name" value="glgA"/>
    <property type="match status" value="1"/>
</dbReference>
<dbReference type="NCBIfam" id="NF001899">
    <property type="entry name" value="PRK00654.1-2"/>
    <property type="match status" value="1"/>
</dbReference>
<dbReference type="PANTHER" id="PTHR45825:SF11">
    <property type="entry name" value="ALPHA AMYLASE DOMAIN-CONTAINING PROTEIN"/>
    <property type="match status" value="1"/>
</dbReference>
<dbReference type="PANTHER" id="PTHR45825">
    <property type="entry name" value="GRANULE-BOUND STARCH SYNTHASE 1, CHLOROPLASTIC/AMYLOPLASTIC"/>
    <property type="match status" value="1"/>
</dbReference>
<dbReference type="Pfam" id="PF08323">
    <property type="entry name" value="Glyco_transf_5"/>
    <property type="match status" value="1"/>
</dbReference>
<dbReference type="Pfam" id="PF00534">
    <property type="entry name" value="Glycos_transf_1"/>
    <property type="match status" value="1"/>
</dbReference>
<dbReference type="SUPFAM" id="SSF53756">
    <property type="entry name" value="UDP-Glycosyltransferase/glycogen phosphorylase"/>
    <property type="match status" value="1"/>
</dbReference>
<feature type="chain" id="PRO_1000126098" description="Glycogen synthase">
    <location>
        <begin position="1"/>
        <end position="477"/>
    </location>
</feature>
<feature type="binding site" evidence="1">
    <location>
        <position position="15"/>
    </location>
    <ligand>
        <name>ADP-alpha-D-glucose</name>
        <dbReference type="ChEBI" id="CHEBI:57498"/>
    </ligand>
</feature>
<organism>
    <name type="scientific">Salmonella enteritidis PT4 (strain P125109)</name>
    <dbReference type="NCBI Taxonomy" id="550537"/>
    <lineage>
        <taxon>Bacteria</taxon>
        <taxon>Pseudomonadati</taxon>
        <taxon>Pseudomonadota</taxon>
        <taxon>Gammaproteobacteria</taxon>
        <taxon>Enterobacterales</taxon>
        <taxon>Enterobacteriaceae</taxon>
        <taxon>Salmonella</taxon>
    </lineage>
</organism>